<name>PYRD_CORGL</name>
<feature type="chain" id="PRO_0000148433" description="Dihydroorotate dehydrogenase (quinone)">
    <location>
        <begin position="1"/>
        <end position="371"/>
    </location>
</feature>
<feature type="active site" description="Nucleophile" evidence="1">
    <location>
        <position position="192"/>
    </location>
</feature>
<feature type="binding site" evidence="1">
    <location>
        <begin position="79"/>
        <end position="83"/>
    </location>
    <ligand>
        <name>FMN</name>
        <dbReference type="ChEBI" id="CHEBI:58210"/>
    </ligand>
</feature>
<feature type="binding site" evidence="1">
    <location>
        <position position="83"/>
    </location>
    <ligand>
        <name>substrate</name>
    </ligand>
</feature>
<feature type="binding site" evidence="1">
    <location>
        <position position="103"/>
    </location>
    <ligand>
        <name>FMN</name>
        <dbReference type="ChEBI" id="CHEBI:58210"/>
    </ligand>
</feature>
<feature type="binding site" evidence="1">
    <location>
        <begin position="128"/>
        <end position="132"/>
    </location>
    <ligand>
        <name>substrate</name>
    </ligand>
</feature>
<feature type="binding site" evidence="1">
    <location>
        <position position="156"/>
    </location>
    <ligand>
        <name>FMN</name>
        <dbReference type="ChEBI" id="CHEBI:58210"/>
    </ligand>
</feature>
<feature type="binding site" evidence="1">
    <location>
        <position position="189"/>
    </location>
    <ligand>
        <name>FMN</name>
        <dbReference type="ChEBI" id="CHEBI:58210"/>
    </ligand>
</feature>
<feature type="binding site" evidence="1">
    <location>
        <position position="189"/>
    </location>
    <ligand>
        <name>substrate</name>
    </ligand>
</feature>
<feature type="binding site" evidence="1">
    <location>
        <position position="194"/>
    </location>
    <ligand>
        <name>substrate</name>
    </ligand>
</feature>
<feature type="binding site" evidence="1">
    <location>
        <position position="225"/>
    </location>
    <ligand>
        <name>FMN</name>
        <dbReference type="ChEBI" id="CHEBI:58210"/>
    </ligand>
</feature>
<feature type="binding site" evidence="1">
    <location>
        <position position="253"/>
    </location>
    <ligand>
        <name>FMN</name>
        <dbReference type="ChEBI" id="CHEBI:58210"/>
    </ligand>
</feature>
<feature type="binding site" evidence="1">
    <location>
        <begin position="254"/>
        <end position="255"/>
    </location>
    <ligand>
        <name>substrate</name>
    </ligand>
</feature>
<feature type="binding site" evidence="1">
    <location>
        <position position="279"/>
    </location>
    <ligand>
        <name>FMN</name>
        <dbReference type="ChEBI" id="CHEBI:58210"/>
    </ligand>
</feature>
<feature type="binding site" evidence="1">
    <location>
        <position position="308"/>
    </location>
    <ligand>
        <name>FMN</name>
        <dbReference type="ChEBI" id="CHEBI:58210"/>
    </ligand>
</feature>
<feature type="binding site" evidence="1">
    <location>
        <begin position="329"/>
        <end position="330"/>
    </location>
    <ligand>
        <name>FMN</name>
        <dbReference type="ChEBI" id="CHEBI:58210"/>
    </ligand>
</feature>
<proteinExistence type="inferred from homology"/>
<accession>Q8NQC0</accession>
<evidence type="ECO:0000255" key="1">
    <source>
        <dbReference type="HAMAP-Rule" id="MF_00225"/>
    </source>
</evidence>
<reference key="1">
    <citation type="journal article" date="2003" name="Appl. Microbiol. Biotechnol.">
        <title>The Corynebacterium glutamicum genome: features and impacts on biotechnological processes.</title>
        <authorList>
            <person name="Ikeda M."/>
            <person name="Nakagawa S."/>
        </authorList>
    </citation>
    <scope>NUCLEOTIDE SEQUENCE [LARGE SCALE GENOMIC DNA]</scope>
    <source>
        <strain>ATCC 13032 / DSM 20300 / JCM 1318 / BCRC 11384 / CCUG 27702 / LMG 3730 / NBRC 12168 / NCIMB 10025 / NRRL B-2784 / 534</strain>
    </source>
</reference>
<reference key="2">
    <citation type="journal article" date="2003" name="J. Biotechnol.">
        <title>The complete Corynebacterium glutamicum ATCC 13032 genome sequence and its impact on the production of L-aspartate-derived amino acids and vitamins.</title>
        <authorList>
            <person name="Kalinowski J."/>
            <person name="Bathe B."/>
            <person name="Bartels D."/>
            <person name="Bischoff N."/>
            <person name="Bott M."/>
            <person name="Burkovski A."/>
            <person name="Dusch N."/>
            <person name="Eggeling L."/>
            <person name="Eikmanns B.J."/>
            <person name="Gaigalat L."/>
            <person name="Goesmann A."/>
            <person name="Hartmann M."/>
            <person name="Huthmacher K."/>
            <person name="Kraemer R."/>
            <person name="Linke B."/>
            <person name="McHardy A.C."/>
            <person name="Meyer F."/>
            <person name="Moeckel B."/>
            <person name="Pfefferle W."/>
            <person name="Puehler A."/>
            <person name="Rey D.A."/>
            <person name="Rueckert C."/>
            <person name="Rupp O."/>
            <person name="Sahm H."/>
            <person name="Wendisch V.F."/>
            <person name="Wiegraebe I."/>
            <person name="Tauch A."/>
        </authorList>
    </citation>
    <scope>NUCLEOTIDE SEQUENCE [LARGE SCALE GENOMIC DNA]</scope>
    <source>
        <strain>ATCC 13032 / DSM 20300 / JCM 1318 / BCRC 11384 / CCUG 27702 / LMG 3730 / NBRC 12168 / NCIMB 10025 / NRRL B-2784 / 534</strain>
    </source>
</reference>
<organism>
    <name type="scientific">Corynebacterium glutamicum (strain ATCC 13032 / DSM 20300 / JCM 1318 / BCRC 11384 / CCUG 27702 / LMG 3730 / NBRC 12168 / NCIMB 10025 / NRRL B-2784 / 534)</name>
    <dbReference type="NCBI Taxonomy" id="196627"/>
    <lineage>
        <taxon>Bacteria</taxon>
        <taxon>Bacillati</taxon>
        <taxon>Actinomycetota</taxon>
        <taxon>Actinomycetes</taxon>
        <taxon>Mycobacteriales</taxon>
        <taxon>Corynebacteriaceae</taxon>
        <taxon>Corynebacterium</taxon>
    </lineage>
</organism>
<sequence>MSKQSPTRKLRQTVYDASLKVMFTLRPERIHGIMNKALGVVDGVAPLNRTMEKIIAVHDDSLSQEVFGVTFPRPLGLAAGFDKNASMADAWGAVGFGYAELGTVTASPQPGNPTPRLFRLPADKAILNRMGFNNLGAAEVAKNLRNRKSTDVIGINIGKTKVVPAEHAVDDYRRSASLLGDLADYLVVNVSSPNTPGLRDLQAVESLRPILAAVQESTTVPVLVKIAPDLSDEDIDAVADLAVELKLAGIVATNTTISREGLNTPSGEVEAMGAGGISGAPVAARSLEVLKRLYARVGKEMVLISVGGISTPEQAWERITSGATLLQGYTPFIYGGPDWIRDIHLGIAKQLKAHGLRNIADAVGSELEWKN</sequence>
<gene>
    <name evidence="1" type="primary">pyrD</name>
    <name type="ordered locus">Cgl1518</name>
    <name type="ordered locus">cg1713</name>
</gene>
<keyword id="KW-1003">Cell membrane</keyword>
<keyword id="KW-0285">Flavoprotein</keyword>
<keyword id="KW-0288">FMN</keyword>
<keyword id="KW-0472">Membrane</keyword>
<keyword id="KW-0560">Oxidoreductase</keyword>
<keyword id="KW-0665">Pyrimidine biosynthesis</keyword>
<keyword id="KW-1185">Reference proteome</keyword>
<comment type="function">
    <text evidence="1">Catalyzes the conversion of dihydroorotate to orotate with quinone as electron acceptor.</text>
</comment>
<comment type="catalytic activity">
    <reaction evidence="1">
        <text>(S)-dihydroorotate + a quinone = orotate + a quinol</text>
        <dbReference type="Rhea" id="RHEA:30187"/>
        <dbReference type="ChEBI" id="CHEBI:24646"/>
        <dbReference type="ChEBI" id="CHEBI:30839"/>
        <dbReference type="ChEBI" id="CHEBI:30864"/>
        <dbReference type="ChEBI" id="CHEBI:132124"/>
        <dbReference type="EC" id="1.3.5.2"/>
    </reaction>
</comment>
<comment type="cofactor">
    <cofactor evidence="1">
        <name>FMN</name>
        <dbReference type="ChEBI" id="CHEBI:58210"/>
    </cofactor>
    <text evidence="1">Binds 1 FMN per subunit.</text>
</comment>
<comment type="pathway">
    <text evidence="1">Pyrimidine metabolism; UMP biosynthesis via de novo pathway; orotate from (S)-dihydroorotate (quinone route): step 1/1.</text>
</comment>
<comment type="subunit">
    <text evidence="1">Monomer.</text>
</comment>
<comment type="subcellular location">
    <subcellularLocation>
        <location evidence="1">Cell membrane</location>
        <topology evidence="1">Peripheral membrane protein</topology>
    </subcellularLocation>
</comment>
<comment type="similarity">
    <text evidence="1">Belongs to the dihydroorotate dehydrogenase family. Type 2 subfamily.</text>
</comment>
<protein>
    <recommendedName>
        <fullName evidence="1">Dihydroorotate dehydrogenase (quinone)</fullName>
        <ecNumber evidence="1">1.3.5.2</ecNumber>
    </recommendedName>
    <alternativeName>
        <fullName evidence="1">DHOdehase</fullName>
        <shortName evidence="1">DHOD</shortName>
        <shortName evidence="1">DHODase</shortName>
    </alternativeName>
    <alternativeName>
        <fullName evidence="1">Dihydroorotate oxidase</fullName>
    </alternativeName>
</protein>
<dbReference type="EC" id="1.3.5.2" evidence="1"/>
<dbReference type="EMBL" id="BA000036">
    <property type="protein sequence ID" value="BAB98911.1"/>
    <property type="molecule type" value="Genomic_DNA"/>
</dbReference>
<dbReference type="EMBL" id="BX927152">
    <property type="protein sequence ID" value="CAF21527.1"/>
    <property type="molecule type" value="Genomic_DNA"/>
</dbReference>
<dbReference type="RefSeq" id="NP_600734.1">
    <property type="nucleotide sequence ID" value="NC_003450.3"/>
</dbReference>
<dbReference type="RefSeq" id="WP_011014420.1">
    <property type="nucleotide sequence ID" value="NC_006958.1"/>
</dbReference>
<dbReference type="SMR" id="Q8NQC0"/>
<dbReference type="STRING" id="196627.cg1713"/>
<dbReference type="KEGG" id="cgb:cg1713"/>
<dbReference type="KEGG" id="cgl:Cgl1518"/>
<dbReference type="PATRIC" id="fig|196627.13.peg.1486"/>
<dbReference type="eggNOG" id="COG0167">
    <property type="taxonomic scope" value="Bacteria"/>
</dbReference>
<dbReference type="HOGENOM" id="CLU_013640_2_0_11"/>
<dbReference type="OrthoDB" id="9802377at2"/>
<dbReference type="BioCyc" id="CORYNE:G18NG-11101-MONOMER"/>
<dbReference type="UniPathway" id="UPA00070">
    <property type="reaction ID" value="UER00946"/>
</dbReference>
<dbReference type="Proteomes" id="UP000000582">
    <property type="component" value="Chromosome"/>
</dbReference>
<dbReference type="Proteomes" id="UP000001009">
    <property type="component" value="Chromosome"/>
</dbReference>
<dbReference type="GO" id="GO:0005737">
    <property type="term" value="C:cytoplasm"/>
    <property type="evidence" value="ECO:0007669"/>
    <property type="project" value="InterPro"/>
</dbReference>
<dbReference type="GO" id="GO:0005886">
    <property type="term" value="C:plasma membrane"/>
    <property type="evidence" value="ECO:0007669"/>
    <property type="project" value="UniProtKB-SubCell"/>
</dbReference>
<dbReference type="GO" id="GO:0106430">
    <property type="term" value="F:dihydroorotate dehydrogenase (quinone) activity"/>
    <property type="evidence" value="ECO:0007669"/>
    <property type="project" value="UniProtKB-EC"/>
</dbReference>
<dbReference type="GO" id="GO:0006207">
    <property type="term" value="P:'de novo' pyrimidine nucleobase biosynthetic process"/>
    <property type="evidence" value="ECO:0007669"/>
    <property type="project" value="InterPro"/>
</dbReference>
<dbReference type="GO" id="GO:0044205">
    <property type="term" value="P:'de novo' UMP biosynthetic process"/>
    <property type="evidence" value="ECO:0007669"/>
    <property type="project" value="UniProtKB-UniRule"/>
</dbReference>
<dbReference type="CDD" id="cd04738">
    <property type="entry name" value="DHOD_2_like"/>
    <property type="match status" value="1"/>
</dbReference>
<dbReference type="FunFam" id="3.20.20.70:FF:000123">
    <property type="entry name" value="Dihydroorotate dehydrogenase (quinone)"/>
    <property type="match status" value="1"/>
</dbReference>
<dbReference type="Gene3D" id="3.20.20.70">
    <property type="entry name" value="Aldolase class I"/>
    <property type="match status" value="1"/>
</dbReference>
<dbReference type="HAMAP" id="MF_00225">
    <property type="entry name" value="DHO_dh_type2"/>
    <property type="match status" value="1"/>
</dbReference>
<dbReference type="InterPro" id="IPR013785">
    <property type="entry name" value="Aldolase_TIM"/>
</dbReference>
<dbReference type="InterPro" id="IPR050074">
    <property type="entry name" value="DHO_dehydrogenase"/>
</dbReference>
<dbReference type="InterPro" id="IPR005719">
    <property type="entry name" value="Dihydroorotate_DH_2"/>
</dbReference>
<dbReference type="InterPro" id="IPR005720">
    <property type="entry name" value="Dihydroorotate_DH_cat"/>
</dbReference>
<dbReference type="InterPro" id="IPR001295">
    <property type="entry name" value="Dihydroorotate_DH_CS"/>
</dbReference>
<dbReference type="NCBIfam" id="NF003648">
    <property type="entry name" value="PRK05286.2-1"/>
    <property type="match status" value="1"/>
</dbReference>
<dbReference type="NCBIfam" id="NF003652">
    <property type="entry name" value="PRK05286.2-5"/>
    <property type="match status" value="1"/>
</dbReference>
<dbReference type="NCBIfam" id="TIGR01036">
    <property type="entry name" value="pyrD_sub2"/>
    <property type="match status" value="1"/>
</dbReference>
<dbReference type="PANTHER" id="PTHR48109:SF4">
    <property type="entry name" value="DIHYDROOROTATE DEHYDROGENASE (QUINONE), MITOCHONDRIAL"/>
    <property type="match status" value="1"/>
</dbReference>
<dbReference type="PANTHER" id="PTHR48109">
    <property type="entry name" value="DIHYDROOROTATE DEHYDROGENASE (QUINONE), MITOCHONDRIAL-RELATED"/>
    <property type="match status" value="1"/>
</dbReference>
<dbReference type="Pfam" id="PF01180">
    <property type="entry name" value="DHO_dh"/>
    <property type="match status" value="1"/>
</dbReference>
<dbReference type="SUPFAM" id="SSF51395">
    <property type="entry name" value="FMN-linked oxidoreductases"/>
    <property type="match status" value="1"/>
</dbReference>
<dbReference type="PROSITE" id="PS00911">
    <property type="entry name" value="DHODEHASE_1"/>
    <property type="match status" value="1"/>
</dbReference>
<dbReference type="PROSITE" id="PS00912">
    <property type="entry name" value="DHODEHASE_2"/>
    <property type="match status" value="1"/>
</dbReference>